<protein>
    <recommendedName>
        <fullName>Signal-induced proliferation-associated 1-like protein 1</fullName>
        <shortName>SIPA1-like protein 1</shortName>
    </recommendedName>
    <alternativeName>
        <fullName>SPA-1-like protein p1294</fullName>
    </alternativeName>
    <alternativeName>
        <fullName>Spine-associated Rap GTPase-activating protein</fullName>
        <shortName>SPAR</shortName>
    </alternativeName>
</protein>
<comment type="function">
    <text evidence="8">Stimulates the GTPase activity of RAP2A. Promotes reorganization of the actin cytoskeleton and recruits DLG4 to F-actin. Contributes to the regulation of dendritic spine morphogenesis.</text>
</comment>
<comment type="subunit">
    <text evidence="1 8 9 12">Interacts (via PDZ domain) with EPHA4 (via PDZ motif); controls neuronal morphology through regulation of the RAP1 (RAP1A or RAP1B) and RAP2 (RAP2A, RAP2B or RAP2C) GTPases (By similarity). Interacts with DLG4, PDLIM5, PDLIM7 and LZTS3. Interacts with the actin cytoskeleton.</text>
</comment>
<comment type="subcellular location">
    <subcellularLocation>
        <location>Cytoplasm</location>
        <location>Cytoskeleton</location>
    </subcellularLocation>
    <subcellularLocation>
        <location>Postsynaptic density</location>
    </subcellularLocation>
    <subcellularLocation>
        <location>Synapse</location>
        <location>Synaptosome</location>
    </subcellularLocation>
    <text>Associated with the actin cytoskeleton. Detected at synapses and dendritic spines of cultured hippocampal neurons.</text>
</comment>
<comment type="tissue specificity">
    <text evidence="8 9">Detected in brain (at protein level).</text>
</comment>
<comment type="PTM">
    <text>Ubiquitinated and degraded by the SCF(BTRC) following phosphorylation by PLK2.</text>
</comment>
<comment type="PTM">
    <text evidence="10">Phosphorylated at Ser-1367 by CDK5, creating a docking site for the POLO box domains of PLK2. Subsequently, PLK2 binds and phosphorylates SIPA1L1, leading to ubiquitination and degradation by the proteasome.</text>
</comment>
<proteinExistence type="evidence at protein level"/>
<reference key="1">
    <citation type="submission" date="1997-09" db="EMBL/GenBank/DDBJ databases">
        <authorList>
            <person name="Takeuchi M."/>
            <person name="Ide N."/>
            <person name="Hata Y."/>
            <person name="Takai Y."/>
        </authorList>
    </citation>
    <scope>NUCLEOTIDE SEQUENCE [MRNA]</scope>
</reference>
<reference key="2">
    <citation type="journal article" date="2001" name="Neuron">
        <title>Regulation of dendritic spine morphology by SPAR, a PSD-95-associated RapGAP.</title>
        <authorList>
            <person name="Pak D.T."/>
            <person name="Yang S."/>
            <person name="Rudolph-Correia S."/>
            <person name="Kim E."/>
            <person name="Sheng M."/>
        </authorList>
    </citation>
    <scope>FUNCTION</scope>
    <scope>INTERACTION WITH DLG4</scope>
    <scope>SUBUNIT</scope>
    <scope>SUBCELLULAR LOCATION</scope>
    <scope>MUTAGENESIS OF ARG-743 AND 846-ARG-THR-847</scope>
    <scope>TISSUE SPECIFICITY</scope>
</reference>
<reference key="3">
    <citation type="journal article" date="2006" name="J. Biol. Chem.">
        <title>ProSAP-interacting protein 1 (ProSAPiP1), a novel protein of the postsynaptic density that links the spine-associated Rap-Gap (SPAR) to the scaffolding protein ProSAP2/Shank3.</title>
        <authorList>
            <person name="Wendholt D."/>
            <person name="Spilker C."/>
            <person name="Schmitt A."/>
            <person name="Dolnik A."/>
            <person name="Smalla K.H."/>
            <person name="Proepper C."/>
            <person name="Bockmann J."/>
            <person name="Sobue K."/>
            <person name="Gundelfinger E.D."/>
            <person name="Kreutz M.R."/>
            <person name="Boeckers T.M."/>
        </authorList>
    </citation>
    <scope>INTERACTION WITH LZTS3</scope>
    <scope>SUBCELLULAR LOCATION</scope>
    <scope>TISSUE SPECIFICITY</scope>
</reference>
<reference key="4">
    <citation type="journal article" date="2007" name="J. Neurosci.">
        <title>The EphA4 receptor regulates neuronal morphology through SPAR-mediated inactivation of Rap GTPases.</title>
        <authorList>
            <person name="Richter M."/>
            <person name="Murai K.K."/>
            <person name="Bourgin C."/>
            <person name="Pak D.T."/>
            <person name="Pasquale E.B."/>
        </authorList>
    </citation>
    <scope>PHOSPHORYLATION</scope>
</reference>
<reference key="5">
    <citation type="journal article" date="2008" name="J. Biol. Chem.">
        <title>Regulation of postsynaptic RapGAP SPAR by Polo-like kinase 2 and the SCFbeta-TRCP ubiquitin ligase in hippocampal neurons.</title>
        <authorList>
            <person name="Ang X.L."/>
            <person name="Seeburg D.P."/>
            <person name="Sheng M."/>
            <person name="Harper J.W."/>
        </authorList>
    </citation>
    <scope>PHOSPHORYLATION AT SER-1344 AND THR-1348</scope>
    <scope>UBIQUITINATION</scope>
    <scope>MUTAGENESIS OF SER-1344 AND THR-1348</scope>
</reference>
<reference key="6">
    <citation type="journal article" date="2008" name="Neuron">
        <title>Critical role of CDK5 and Polo-like kinase 2 in homeostatic synaptic plasticity during elevated activity.</title>
        <authorList>
            <person name="Seeburg D.P."/>
            <person name="Feliu-Mojer M."/>
            <person name="Gaiottino J."/>
            <person name="Pak D.T."/>
            <person name="Sheng M."/>
        </authorList>
    </citation>
    <scope>PHOSPHORYLATION AT SER-1367</scope>
    <scope>UBIQUITINATION</scope>
    <scope>MUTAGENESIS OF SER-1367</scope>
</reference>
<reference key="7">
    <citation type="journal article" date="2010" name="Mol. Cell. Neurosci.">
        <title>Postsynaptic PDLIM5/Enigma homolog binds SPAR and causes dendritic spine shrinkage.</title>
        <authorList>
            <person name="Herrick S."/>
            <person name="Evers D.M."/>
            <person name="Lee J.Y."/>
            <person name="Udagawa N."/>
            <person name="Pak D.T."/>
        </authorList>
    </citation>
    <scope>INTERACTION WITH PDLIM5 AND PDLIM7</scope>
</reference>
<reference key="8">
    <citation type="journal article" date="2011" name="Neuron">
        <title>Requirement for Plk2 in orchestrated ras and rap signaling, homeostatic structural plasticity, and memory.</title>
        <authorList>
            <person name="Lee K.J."/>
            <person name="Lee Y."/>
            <person name="Rozeboom A."/>
            <person name="Lee J.Y."/>
            <person name="Udagawa N."/>
            <person name="Hoe H.S."/>
            <person name="Pak D.T."/>
        </authorList>
    </citation>
    <scope>PHOSPHORYLATION</scope>
    <scope>UBIQUITINATION</scope>
</reference>
<reference key="9">
    <citation type="journal article" date="2012" name="Nat. Commun.">
        <title>Quantitative maps of protein phosphorylation sites across 14 different rat organs and tissues.</title>
        <authorList>
            <person name="Lundby A."/>
            <person name="Secher A."/>
            <person name="Lage K."/>
            <person name="Nordsborg N.B."/>
            <person name="Dmytriyev A."/>
            <person name="Lundby C."/>
            <person name="Olsen J.V."/>
        </authorList>
    </citation>
    <scope>PHOSPHORYLATION [LARGE SCALE ANALYSIS] AT SER-1288; SER-1449; SER-1451; SER-1567; SER-1603 AND SER-1752</scope>
    <scope>IDENTIFICATION BY MASS SPECTROMETRY [LARGE SCALE ANALYSIS]</scope>
</reference>
<gene>
    <name type="primary">Sipa1l1</name>
    <name type="synonym">Spa1</name>
</gene>
<evidence type="ECO:0000250" key="1"/>
<evidence type="ECO:0000250" key="2">
    <source>
        <dbReference type="UniProtKB" id="O43166"/>
    </source>
</evidence>
<evidence type="ECO:0000250" key="3">
    <source>
        <dbReference type="UniProtKB" id="Q8C0T5"/>
    </source>
</evidence>
<evidence type="ECO:0000255" key="4"/>
<evidence type="ECO:0000255" key="5">
    <source>
        <dbReference type="PROSITE-ProRule" id="PRU00143"/>
    </source>
</evidence>
<evidence type="ECO:0000255" key="6">
    <source>
        <dbReference type="PROSITE-ProRule" id="PRU00165"/>
    </source>
</evidence>
<evidence type="ECO:0000256" key="7">
    <source>
        <dbReference type="SAM" id="MobiDB-lite"/>
    </source>
</evidence>
<evidence type="ECO:0000269" key="8">
    <source>
    </source>
</evidence>
<evidence type="ECO:0000269" key="9">
    <source>
    </source>
</evidence>
<evidence type="ECO:0000269" key="10">
    <source>
    </source>
</evidence>
<evidence type="ECO:0000269" key="11">
    <source>
    </source>
</evidence>
<evidence type="ECO:0000269" key="12">
    <source>
    </source>
</evidence>
<evidence type="ECO:0007744" key="13">
    <source>
    </source>
</evidence>
<accession>O35412</accession>
<feature type="chain" id="PRO_0000056748" description="Signal-induced proliferation-associated 1-like protein 1">
    <location>
        <begin position="1"/>
        <end position="1822"/>
    </location>
</feature>
<feature type="domain" description="Rap-GAP" evidence="6">
    <location>
        <begin position="638"/>
        <end position="855"/>
    </location>
</feature>
<feature type="domain" description="PDZ" evidence="5">
    <location>
        <begin position="992"/>
        <end position="1068"/>
    </location>
</feature>
<feature type="region of interest" description="Disordered" evidence="7">
    <location>
        <begin position="1"/>
        <end position="30"/>
    </location>
</feature>
<feature type="region of interest" description="Disordered" evidence="7">
    <location>
        <begin position="47"/>
        <end position="125"/>
    </location>
</feature>
<feature type="region of interest" description="Disordered" evidence="7">
    <location>
        <begin position="277"/>
        <end position="297"/>
    </location>
</feature>
<feature type="region of interest" description="Disordered" evidence="7">
    <location>
        <begin position="1134"/>
        <end position="1165"/>
    </location>
</feature>
<feature type="region of interest" description="Disordered" evidence="7">
    <location>
        <begin position="1183"/>
        <end position="1252"/>
    </location>
</feature>
<feature type="region of interest" description="Disordered" evidence="7">
    <location>
        <begin position="1286"/>
        <end position="1324"/>
    </location>
</feature>
<feature type="region of interest" description="Disordered" evidence="7">
    <location>
        <begin position="1358"/>
        <end position="1382"/>
    </location>
</feature>
<feature type="region of interest" description="Disordered" evidence="7">
    <location>
        <begin position="1395"/>
        <end position="1493"/>
    </location>
</feature>
<feature type="region of interest" description="Disordered" evidence="7">
    <location>
        <begin position="1567"/>
        <end position="1595"/>
    </location>
</feature>
<feature type="coiled-coil region" evidence="4">
    <location>
        <begin position="1753"/>
        <end position="1813"/>
    </location>
</feature>
<feature type="compositionally biased region" description="Basic and acidic residues" evidence="7">
    <location>
        <begin position="84"/>
        <end position="94"/>
    </location>
</feature>
<feature type="compositionally biased region" description="Low complexity" evidence="7">
    <location>
        <begin position="95"/>
        <end position="125"/>
    </location>
</feature>
<feature type="compositionally biased region" description="Low complexity" evidence="7">
    <location>
        <begin position="1188"/>
        <end position="1198"/>
    </location>
</feature>
<feature type="compositionally biased region" description="Polar residues" evidence="7">
    <location>
        <begin position="1225"/>
        <end position="1244"/>
    </location>
</feature>
<feature type="compositionally biased region" description="Low complexity" evidence="7">
    <location>
        <begin position="1300"/>
        <end position="1315"/>
    </location>
</feature>
<feature type="compositionally biased region" description="Low complexity" evidence="7">
    <location>
        <begin position="1358"/>
        <end position="1367"/>
    </location>
</feature>
<feature type="compositionally biased region" description="Basic and acidic residues" evidence="7">
    <location>
        <begin position="1395"/>
        <end position="1407"/>
    </location>
</feature>
<feature type="compositionally biased region" description="Polar residues" evidence="7">
    <location>
        <begin position="1417"/>
        <end position="1436"/>
    </location>
</feature>
<feature type="compositionally biased region" description="Low complexity" evidence="7">
    <location>
        <begin position="1437"/>
        <end position="1451"/>
    </location>
</feature>
<feature type="compositionally biased region" description="Low complexity" evidence="7">
    <location>
        <begin position="1471"/>
        <end position="1486"/>
    </location>
</feature>
<feature type="modified residue" description="Phosphoserine" evidence="2">
    <location>
        <position position="162"/>
    </location>
</feature>
<feature type="modified residue" description="Phosphoserine" evidence="2">
    <location>
        <position position="187"/>
    </location>
</feature>
<feature type="modified residue" description="Phosphoserine" evidence="2">
    <location>
        <position position="193"/>
    </location>
</feature>
<feature type="modified residue" description="Phosphoserine" evidence="2">
    <location>
        <position position="208"/>
    </location>
</feature>
<feature type="modified residue" description="Phosphoserine" evidence="2">
    <location>
        <position position="255"/>
    </location>
</feature>
<feature type="modified residue" description="Phosphoserine" evidence="2">
    <location>
        <position position="288"/>
    </location>
</feature>
<feature type="modified residue" description="Phosphoserine" evidence="2">
    <location>
        <position position="1117"/>
    </location>
</feature>
<feature type="modified residue" description="Phosphoserine" evidence="2">
    <location>
        <position position="1126"/>
    </location>
</feature>
<feature type="modified residue" description="Phosphoserine" evidence="2">
    <location>
        <position position="1155"/>
    </location>
</feature>
<feature type="modified residue" description="Phosphoserine" evidence="3">
    <location>
        <position position="1166"/>
    </location>
</feature>
<feature type="modified residue" description="Phosphoserine" evidence="2">
    <location>
        <position position="1188"/>
    </location>
</feature>
<feature type="modified residue" description="Phosphoserine" evidence="2">
    <location>
        <position position="1209"/>
    </location>
</feature>
<feature type="modified residue" description="Phosphoserine" evidence="2">
    <location>
        <position position="1220"/>
    </location>
</feature>
<feature type="modified residue" description="Phosphoserine" evidence="2">
    <location>
        <position position="1273"/>
    </location>
</feature>
<feature type="modified residue" description="Phosphoserine" evidence="13">
    <location>
        <position position="1288"/>
    </location>
</feature>
<feature type="modified residue" description="Phosphoserine; by PLK2" evidence="11">
    <location>
        <position position="1344"/>
    </location>
</feature>
<feature type="modified residue" description="Phosphothreonine; by PLK2" evidence="11">
    <location>
        <position position="1348"/>
    </location>
</feature>
<feature type="modified residue" description="Phosphoserine; by CDK5" evidence="10">
    <location>
        <position position="1367"/>
    </location>
</feature>
<feature type="modified residue" description="Phosphoserine" evidence="2">
    <location>
        <position position="1384"/>
    </location>
</feature>
<feature type="modified residue" description="Phosphoserine" evidence="2">
    <location>
        <position position="1408"/>
    </location>
</feature>
<feature type="modified residue" description="Phosphoserine" evidence="2">
    <location>
        <position position="1409"/>
    </location>
</feature>
<feature type="modified residue" description="Phosphoserine" evidence="2">
    <location>
        <position position="1430"/>
    </location>
</feature>
<feature type="modified residue" description="Phosphoserine" evidence="13">
    <location>
        <position position="1449"/>
    </location>
</feature>
<feature type="modified residue" description="Phosphoserine" evidence="13">
    <location>
        <position position="1451"/>
    </location>
</feature>
<feature type="modified residue" description="Phosphoserine" evidence="2">
    <location>
        <position position="1546"/>
    </location>
</feature>
<feature type="modified residue" description="Phosphoserine" evidence="13">
    <location>
        <position position="1567"/>
    </location>
</feature>
<feature type="modified residue" description="Phosphothreonine" evidence="2">
    <location>
        <position position="1569"/>
    </location>
</feature>
<feature type="modified residue" description="Phosphoserine" evidence="2">
    <location>
        <position position="1572"/>
    </location>
</feature>
<feature type="modified residue" description="Phosphoserine" evidence="2">
    <location>
        <position position="1583"/>
    </location>
</feature>
<feature type="modified residue" description="Phosphoserine" evidence="2">
    <location>
        <position position="1586"/>
    </location>
</feature>
<feature type="modified residue" description="Phosphoserine" evidence="13">
    <location>
        <position position="1603"/>
    </location>
</feature>
<feature type="modified residue" description="Phosphoserine" evidence="2">
    <location>
        <position position="1606"/>
    </location>
</feature>
<feature type="modified residue" description="Asymmetric dimethylarginine" evidence="3">
    <location>
        <position position="1619"/>
    </location>
</feature>
<feature type="modified residue" description="Phosphoserine" evidence="3">
    <location>
        <position position="1621"/>
    </location>
</feature>
<feature type="modified residue" description="Phosphoserine" evidence="3">
    <location>
        <position position="1665"/>
    </location>
</feature>
<feature type="modified residue" description="Phosphoserine" evidence="3">
    <location>
        <position position="1668"/>
    </location>
</feature>
<feature type="modified residue" description="Phosphoserine" evidence="3">
    <location>
        <position position="1726"/>
    </location>
</feature>
<feature type="modified residue" description="Phosphoserine" evidence="3">
    <location>
        <position position="1729"/>
    </location>
</feature>
<feature type="modified residue" description="Phosphoserine" evidence="3">
    <location>
        <position position="1746"/>
    </location>
</feature>
<feature type="modified residue" description="Phosphoserine" evidence="3">
    <location>
        <position position="1747"/>
    </location>
</feature>
<feature type="modified residue" description="Phosphoserine" evidence="13">
    <location>
        <position position="1752"/>
    </location>
</feature>
<feature type="mutagenesis site" description="Decreases stimulation of the GTPase activity of RAP2A." evidence="8">
    <original>R</original>
    <variation>A</variation>
    <location>
        <position position="743"/>
    </location>
</feature>
<feature type="mutagenesis site" description="Abolishes stimulation of the GTPase activity of RAP2A." evidence="8">
    <original>RT</original>
    <variation>AS</variation>
    <location>
        <begin position="846"/>
        <end position="847"/>
    </location>
</feature>
<feature type="mutagenesis site" description="Abolishes ubiquitination and degradation by the proteasome; when associated with A-1348." evidence="11">
    <original>S</original>
    <variation>A</variation>
    <location>
        <position position="1344"/>
    </location>
</feature>
<feature type="mutagenesis site" description="Abolishes ubiquitination and degradation by the proteasome; when associated with A-1344." evidence="11">
    <original>T</original>
    <variation>A</variation>
    <location>
        <position position="1348"/>
    </location>
</feature>
<feature type="mutagenesis site" description="Abolishes phosphorylation by CDK5 and subsequent phosphorylation by PLK2, leading to prevent ubiquitination and degradation by the proteasome." evidence="10">
    <original>S</original>
    <variation>A</variation>
    <location>
        <position position="1367"/>
    </location>
</feature>
<organism>
    <name type="scientific">Rattus norvegicus</name>
    <name type="common">Rat</name>
    <dbReference type="NCBI Taxonomy" id="10116"/>
    <lineage>
        <taxon>Eukaryota</taxon>
        <taxon>Metazoa</taxon>
        <taxon>Chordata</taxon>
        <taxon>Craniata</taxon>
        <taxon>Vertebrata</taxon>
        <taxon>Euteleostomi</taxon>
        <taxon>Mammalia</taxon>
        <taxon>Eutheria</taxon>
        <taxon>Euarchontoglires</taxon>
        <taxon>Glires</taxon>
        <taxon>Rodentia</taxon>
        <taxon>Myomorpha</taxon>
        <taxon>Muroidea</taxon>
        <taxon>Muridae</taxon>
        <taxon>Murinae</taxon>
        <taxon>Rattus</taxon>
    </lineage>
</organism>
<sequence>MTSLKRSQTERPVTADRASVVSTDGTPKVHTDDFYMRRFRSQNGSLGSSVMAAVGPPRSEGPHHITSTPGVPKMGVRARIADWPPRKENVKESSRSSQEIETSSCLESLSSKGSPVSQGSSVSLNSNDSAMLKSIQNTLKNKTGPAESMDSRFLMPEAYPSSPRKALRRIRQRSNSDITISELDVDSFDECISPTYKSGPSLHREYGSTSSIDKQGTSGESFFGLLKGYKDDRADRGPTPTKLSDFLITGGGKGSGFSLDVIDGPISQRENLRLFKEREKPLKRRSKSETGDSSIFRKLRNAKGEELGKSSDLEDNRSEDSVRPWTCPKCFAHYDVQSILFDLNEAIMNRHNVIKRRNTTTGASAAAVASLVSGPLSHSTSFSSPMGSTEDFNSKGSLGMDQGDDKSNELVMSCPYFRNEIGGEGERKISLSKSNSGSFSGCESTSFESALSSHCTNAGVAVLEVPKESLMLHLDRVRRYTVEHVDLGAYYYRKCFYQKEHWNYFGADENLGPVAVSIRREKPEDMKENGSPYNYRIIFRTSELMTLRGSVLEDAIPSTAKHSTARGLPLKEVLEHVIPELNVQCLRLAFNTPKVTEQLMKLDEQGLNYQQKVGIMYCKAGQSTEEEMYNTPKVTEQFMKLDEQGLNYQQKVGIMYCKAGQSTEEEMYNNESAGPAFEEFLQLLGERVRLKGFEKYRAQLDTKTDSTGTHSLYTTYKDYEIMFHVSTMLPYTPNNKQQLLRKRHIGNDIVTIVFQEPGAQPFSPKNIRSHFQHVFVIVRAHNPCTESVCYSVAVTRSRDVPSFGPPIPKGVTFPKSNVFRDFLLAKVINAENAAHKSEKFRAMATRTRQEYLKDLAEKNVTNTPIDPSGKFPFISLASKKKEKSKPYPGAELSSMGAIVWAVRAKDYNKAMEFDCLLGISNEFIVLIEQETKSVVFNCSCRDVIGWTSSDSSLKIFYERGECISVESFMSSEDIKEIVKRLQFVSKGCESVEMTLRRNGLGQLGFHVNYEGIVADVEPYGYAWQAGLKQGSRLVEICKVAVATLSHEQMIDLLRTSVTVKVVIIPPHDDCTPRRSCSETYRMPVMEYKMNEGVSYEYKFPFRSNNKWQRNAGKGAHSPQVPLQLQSPMISRVNAGKGDGKMPLPERAANIPRSISSDGRPLERRLSPGSDIYVTVSSMALARSQCRNSPSNLSSSSETGSGGGTYRQKSMPEGFGVSRRSPASIDRQNTQSDIGGSGKSTPSWQRSEDSLADQMEPTCHLPAVSKVLPAFRESPSGRLMRQDPVVHLSPNKQGHSDSHYSSHSSSNTLSSNASSAHSDEKWYDGDRTESDLNSYNYLQGTSADSGIDTASYGLSHGSTASLGASTSSPRSGPGKEKVAPLWHSSSEVLSLADRTLETEGHGMDRKTESSLSLDIHSKSQGGSSPLTRENSTFSINDATSHTSTMSSRHSASPVVFSSARSSPKEELHPTTSSQLAPSFSSSSSSSSGPRTFYPRQGATSKYLIGWKKPEGTINSVGFMDTRKRHQSDGNEIAHTRLRASTRDLRASPKPTSKSTIEEDLKKLIDLESPTPESQKNFKFHGLSSPQSPFPSTPTSRRALHRTLSDESIYSSQREHFFTSRASLLDQALPNDVFFSSTYPSLPKSLPLRRPSYTLGMKSLHGEFFASDSSLTDIQETRRQPIPDPGLMPLPDTASDLDWSNLVDAAKAYEVQRASFFAASDENHRPLSAASNSDQLEEQALVQMKSYSSSKDSSPTLASKVDQLEGMLKMLREDLKKEKEDKAHLQAEVEHLREDNLRLQEESQNASDKLKKFTEWVFNTIDMS</sequence>
<name>SI1L1_RAT</name>
<dbReference type="EMBL" id="AF026504">
    <property type="protein sequence ID" value="AAB81526.1"/>
    <property type="molecule type" value="mRNA"/>
</dbReference>
<dbReference type="PIR" id="T14106">
    <property type="entry name" value="T14106"/>
</dbReference>
<dbReference type="RefSeq" id="NP_647546.1">
    <property type="nucleotide sequence ID" value="NM_139330.1"/>
</dbReference>
<dbReference type="SMR" id="O35412"/>
<dbReference type="BioGRID" id="251530">
    <property type="interactions" value="7"/>
</dbReference>
<dbReference type="FunCoup" id="O35412">
    <property type="interactions" value="1597"/>
</dbReference>
<dbReference type="IntAct" id="O35412">
    <property type="interactions" value="1"/>
</dbReference>
<dbReference type="MINT" id="O35412"/>
<dbReference type="STRING" id="10116.ENSRNOP00000075549"/>
<dbReference type="GlyGen" id="O35412">
    <property type="glycosylation" value="3 sites"/>
</dbReference>
<dbReference type="iPTMnet" id="O35412"/>
<dbReference type="PhosphoSitePlus" id="O35412"/>
<dbReference type="PaxDb" id="10116-ENSRNOP00000054996"/>
<dbReference type="GeneID" id="246212"/>
<dbReference type="KEGG" id="rno:246212"/>
<dbReference type="UCSC" id="RGD:708497">
    <property type="organism name" value="rat"/>
</dbReference>
<dbReference type="AGR" id="RGD:708497"/>
<dbReference type="CTD" id="26037"/>
<dbReference type="RGD" id="708497">
    <property type="gene designation" value="Sipa1l1"/>
</dbReference>
<dbReference type="eggNOG" id="KOG3686">
    <property type="taxonomic scope" value="Eukaryota"/>
</dbReference>
<dbReference type="InParanoid" id="O35412"/>
<dbReference type="PhylomeDB" id="O35412"/>
<dbReference type="PRO" id="PR:O35412"/>
<dbReference type="Proteomes" id="UP000002494">
    <property type="component" value="Unplaced"/>
</dbReference>
<dbReference type="GO" id="GO:0005737">
    <property type="term" value="C:cytoplasm"/>
    <property type="evidence" value="ECO:0000318"/>
    <property type="project" value="GO_Central"/>
</dbReference>
<dbReference type="GO" id="GO:0005856">
    <property type="term" value="C:cytoskeleton"/>
    <property type="evidence" value="ECO:0007669"/>
    <property type="project" value="UniProtKB-SubCell"/>
</dbReference>
<dbReference type="GO" id="GO:0005829">
    <property type="term" value="C:cytosol"/>
    <property type="evidence" value="ECO:0000304"/>
    <property type="project" value="Reactome"/>
</dbReference>
<dbReference type="GO" id="GO:0043197">
    <property type="term" value="C:dendritic spine"/>
    <property type="evidence" value="ECO:0000314"/>
    <property type="project" value="UniProtKB"/>
</dbReference>
<dbReference type="GO" id="GO:0098978">
    <property type="term" value="C:glutamatergic synapse"/>
    <property type="evidence" value="ECO:0000314"/>
    <property type="project" value="SynGO"/>
</dbReference>
<dbReference type="GO" id="GO:0043025">
    <property type="term" value="C:neuronal cell body"/>
    <property type="evidence" value="ECO:0000314"/>
    <property type="project" value="RGD"/>
</dbReference>
<dbReference type="GO" id="GO:0098794">
    <property type="term" value="C:postsynapse"/>
    <property type="evidence" value="ECO:0000314"/>
    <property type="project" value="SynGO"/>
</dbReference>
<dbReference type="GO" id="GO:0014069">
    <property type="term" value="C:postsynaptic density"/>
    <property type="evidence" value="ECO:0000314"/>
    <property type="project" value="UniProtKB"/>
</dbReference>
<dbReference type="GO" id="GO:0032991">
    <property type="term" value="C:protein-containing complex"/>
    <property type="evidence" value="ECO:0000314"/>
    <property type="project" value="RGD"/>
</dbReference>
<dbReference type="GO" id="GO:0051015">
    <property type="term" value="F:actin filament binding"/>
    <property type="evidence" value="ECO:0000314"/>
    <property type="project" value="UniProtKB"/>
</dbReference>
<dbReference type="GO" id="GO:0046875">
    <property type="term" value="F:ephrin receptor binding"/>
    <property type="evidence" value="ECO:0000266"/>
    <property type="project" value="RGD"/>
</dbReference>
<dbReference type="GO" id="GO:0005096">
    <property type="term" value="F:GTPase activator activity"/>
    <property type="evidence" value="ECO:0000318"/>
    <property type="project" value="GO_Central"/>
</dbReference>
<dbReference type="GO" id="GO:0019901">
    <property type="term" value="F:protein kinase binding"/>
    <property type="evidence" value="ECO:0000353"/>
    <property type="project" value="UniProtKB"/>
</dbReference>
<dbReference type="GO" id="GO:0044877">
    <property type="term" value="F:protein-containing complex binding"/>
    <property type="evidence" value="ECO:0000353"/>
    <property type="project" value="RGD"/>
</dbReference>
<dbReference type="GO" id="GO:0031625">
    <property type="term" value="F:ubiquitin protein ligase binding"/>
    <property type="evidence" value="ECO:0000314"/>
    <property type="project" value="RGD"/>
</dbReference>
<dbReference type="GO" id="GO:0030036">
    <property type="term" value="P:actin cytoskeleton organization"/>
    <property type="evidence" value="ECO:0000314"/>
    <property type="project" value="UniProtKB"/>
</dbReference>
<dbReference type="GO" id="GO:0090630">
    <property type="term" value="P:activation of GTPase activity"/>
    <property type="evidence" value="ECO:0000314"/>
    <property type="project" value="UniProtKB"/>
</dbReference>
<dbReference type="GO" id="GO:0048013">
    <property type="term" value="P:ephrin receptor signaling pathway"/>
    <property type="evidence" value="ECO:0000250"/>
    <property type="project" value="UniProtKB"/>
</dbReference>
<dbReference type="GO" id="GO:0098974">
    <property type="term" value="P:postsynaptic actin cytoskeleton organization"/>
    <property type="evidence" value="ECO:0000314"/>
    <property type="project" value="SynGO"/>
</dbReference>
<dbReference type="GO" id="GO:0050770">
    <property type="term" value="P:regulation of axonogenesis"/>
    <property type="evidence" value="ECO:0000250"/>
    <property type="project" value="UniProtKB"/>
</dbReference>
<dbReference type="GO" id="GO:0048814">
    <property type="term" value="P:regulation of dendrite morphogenesis"/>
    <property type="evidence" value="ECO:0000315"/>
    <property type="project" value="RGD"/>
</dbReference>
<dbReference type="GO" id="GO:0061001">
    <property type="term" value="P:regulation of dendritic spine morphogenesis"/>
    <property type="evidence" value="ECO:0000314"/>
    <property type="project" value="UniProtKB"/>
</dbReference>
<dbReference type="GO" id="GO:0043087">
    <property type="term" value="P:regulation of GTPase activity"/>
    <property type="evidence" value="ECO:0000314"/>
    <property type="project" value="UniProtKB"/>
</dbReference>
<dbReference type="GO" id="GO:0099151">
    <property type="term" value="P:regulation of postsynaptic density assembly"/>
    <property type="evidence" value="ECO:0000314"/>
    <property type="project" value="SynGO"/>
</dbReference>
<dbReference type="GO" id="GO:0051056">
    <property type="term" value="P:regulation of small GTPase mediated signal transduction"/>
    <property type="evidence" value="ECO:0007669"/>
    <property type="project" value="InterPro"/>
</dbReference>
<dbReference type="GO" id="GO:0048167">
    <property type="term" value="P:regulation of synaptic plasticity"/>
    <property type="evidence" value="ECO:0000314"/>
    <property type="project" value="UniProtKB"/>
</dbReference>
<dbReference type="CDD" id="cd06745">
    <property type="entry name" value="PDZ_SIPA1-like"/>
    <property type="match status" value="1"/>
</dbReference>
<dbReference type="FunFam" id="3.40.50.11210:FF:000002">
    <property type="entry name" value="Signal-induced proliferation-associated 1-like protein 1"/>
    <property type="match status" value="1"/>
</dbReference>
<dbReference type="Gene3D" id="2.30.42.10">
    <property type="match status" value="1"/>
</dbReference>
<dbReference type="Gene3D" id="3.30.1120.160">
    <property type="match status" value="1"/>
</dbReference>
<dbReference type="Gene3D" id="3.40.50.11210">
    <property type="entry name" value="Rap/Ran-GAP"/>
    <property type="match status" value="1"/>
</dbReference>
<dbReference type="InterPro" id="IPR001478">
    <property type="entry name" value="PDZ"/>
</dbReference>
<dbReference type="InterPro" id="IPR036034">
    <property type="entry name" value="PDZ_sf"/>
</dbReference>
<dbReference type="InterPro" id="IPR035974">
    <property type="entry name" value="Rap/Ran-GAP_sf"/>
</dbReference>
<dbReference type="InterPro" id="IPR000331">
    <property type="entry name" value="Rap/Ran_GAP_dom"/>
</dbReference>
<dbReference type="InterPro" id="IPR050989">
    <property type="entry name" value="Rap1_Ran_GAP"/>
</dbReference>
<dbReference type="InterPro" id="IPR021818">
    <property type="entry name" value="SIPA1L_C"/>
</dbReference>
<dbReference type="PANTHER" id="PTHR15711">
    <property type="entry name" value="RAP GTPASE-ACTIVATING PROTEIN"/>
    <property type="match status" value="1"/>
</dbReference>
<dbReference type="PANTHER" id="PTHR15711:SF10">
    <property type="entry name" value="SIGNAL-INDUCED PROLIFERATION-ASSOCIATED 1-LIKE PROTEIN 1"/>
    <property type="match status" value="1"/>
</dbReference>
<dbReference type="Pfam" id="PF00595">
    <property type="entry name" value="PDZ"/>
    <property type="match status" value="1"/>
</dbReference>
<dbReference type="Pfam" id="PF21022">
    <property type="entry name" value="Rap-GAP_dimer"/>
    <property type="match status" value="1"/>
</dbReference>
<dbReference type="Pfam" id="PF02145">
    <property type="entry name" value="Rap_GAP"/>
    <property type="match status" value="1"/>
</dbReference>
<dbReference type="Pfam" id="PF11881">
    <property type="entry name" value="SPAR_C"/>
    <property type="match status" value="1"/>
</dbReference>
<dbReference type="SMART" id="SM00228">
    <property type="entry name" value="PDZ"/>
    <property type="match status" value="1"/>
</dbReference>
<dbReference type="SUPFAM" id="SSF50156">
    <property type="entry name" value="PDZ domain-like"/>
    <property type="match status" value="1"/>
</dbReference>
<dbReference type="SUPFAM" id="SSF111347">
    <property type="entry name" value="Rap/Ran-GAP"/>
    <property type="match status" value="2"/>
</dbReference>
<dbReference type="PROSITE" id="PS50106">
    <property type="entry name" value="PDZ"/>
    <property type="match status" value="1"/>
</dbReference>
<dbReference type="PROSITE" id="PS50085">
    <property type="entry name" value="RAPGAP"/>
    <property type="match status" value="1"/>
</dbReference>
<keyword id="KW-0175">Coiled coil</keyword>
<keyword id="KW-0963">Cytoplasm</keyword>
<keyword id="KW-0206">Cytoskeleton</keyword>
<keyword id="KW-0343">GTPase activation</keyword>
<keyword id="KW-0488">Methylation</keyword>
<keyword id="KW-0597">Phosphoprotein</keyword>
<keyword id="KW-1185">Reference proteome</keyword>
<keyword id="KW-0770">Synapse</keyword>
<keyword id="KW-0771">Synaptosome</keyword>
<keyword id="KW-0832">Ubl conjugation</keyword>